<protein>
    <recommendedName>
        <fullName evidence="1">Pyrokinin-5</fullName>
    </recommendedName>
    <alternativeName>
        <fullName evidence="4">CryDa-Capa-PK</fullName>
    </alternativeName>
    <alternativeName>
        <fullName evidence="1">FXPRL-amide</fullName>
    </alternativeName>
</protein>
<reference evidence="5" key="1">
    <citation type="journal article" date="2009" name="BMC Evol. Biol.">
        <title>A proteomic approach for studying insect phylogeny: CAPA peptides of ancient insect taxa (Dictyoptera, Blattoptera) as a test case.</title>
        <authorList>
            <person name="Roth S."/>
            <person name="Fromm B."/>
            <person name="Gaede G."/>
            <person name="Predel R."/>
        </authorList>
    </citation>
    <scope>PROTEIN SEQUENCE</scope>
    <scope>AMIDATION AT LEU-17</scope>
    <source>
        <tissue evidence="3">Abdominal perisympathetic organs</tissue>
    </source>
</reference>
<keyword id="KW-0027">Amidation</keyword>
<keyword id="KW-0903">Direct protein sequencing</keyword>
<keyword id="KW-0527">Neuropeptide</keyword>
<keyword id="KW-0964">Secreted</keyword>
<name>PPK5_CRYDW</name>
<sequence length="17" mass="1653">GGGGSGETSGMWFGPRL</sequence>
<evidence type="ECO:0000250" key="1">
    <source>
        <dbReference type="UniProtKB" id="P82617"/>
    </source>
</evidence>
<evidence type="ECO:0000255" key="2"/>
<evidence type="ECO:0000269" key="3">
    <source>
    </source>
</evidence>
<evidence type="ECO:0000303" key="4">
    <source>
    </source>
</evidence>
<evidence type="ECO:0000305" key="5"/>
<comment type="function">
    <text evidence="1">Myoactive.</text>
</comment>
<comment type="subcellular location">
    <subcellularLocation>
        <location evidence="5">Secreted</location>
    </subcellularLocation>
</comment>
<comment type="similarity">
    <text evidence="2">Belongs to the pyrokinin family.</text>
</comment>
<feature type="peptide" id="PRO_0000378683" description="Pyrokinin-5" evidence="3">
    <location>
        <begin position="1"/>
        <end position="17"/>
    </location>
</feature>
<feature type="modified residue" description="Leucine amide" evidence="3">
    <location>
        <position position="17"/>
    </location>
</feature>
<proteinExistence type="evidence at protein level"/>
<organism>
    <name type="scientific">Cryptocercus darwini</name>
    <name type="common">Brown-hooded cockroach</name>
    <dbReference type="NCBI Taxonomy" id="89835"/>
    <lineage>
        <taxon>Eukaryota</taxon>
        <taxon>Metazoa</taxon>
        <taxon>Ecdysozoa</taxon>
        <taxon>Arthropoda</taxon>
        <taxon>Hexapoda</taxon>
        <taxon>Insecta</taxon>
        <taxon>Pterygota</taxon>
        <taxon>Neoptera</taxon>
        <taxon>Polyneoptera</taxon>
        <taxon>Dictyoptera</taxon>
        <taxon>Blattodea</taxon>
        <taxon>Blattoidea</taxon>
        <taxon>Cryptocercidae</taxon>
        <taxon>Cryptocercus</taxon>
    </lineage>
</organism>
<dbReference type="GO" id="GO:0005576">
    <property type="term" value="C:extracellular region"/>
    <property type="evidence" value="ECO:0007669"/>
    <property type="project" value="UniProtKB-SubCell"/>
</dbReference>
<dbReference type="GO" id="GO:0005184">
    <property type="term" value="F:neuropeptide hormone activity"/>
    <property type="evidence" value="ECO:0007669"/>
    <property type="project" value="InterPro"/>
</dbReference>
<dbReference type="GO" id="GO:0007218">
    <property type="term" value="P:neuropeptide signaling pathway"/>
    <property type="evidence" value="ECO:0007669"/>
    <property type="project" value="UniProtKB-KW"/>
</dbReference>
<dbReference type="InterPro" id="IPR001484">
    <property type="entry name" value="Pyrokinin_CS"/>
</dbReference>
<dbReference type="PROSITE" id="PS00539">
    <property type="entry name" value="PYROKININ"/>
    <property type="match status" value="1"/>
</dbReference>
<accession>P85569</accession>